<dbReference type="EC" id="7.3.2.1" evidence="1"/>
<dbReference type="EMBL" id="AL935263">
    <property type="protein sequence ID" value="CCC78215.1"/>
    <property type="molecule type" value="Genomic_DNA"/>
</dbReference>
<dbReference type="RefSeq" id="YP_004888729.1">
    <property type="nucleotide sequence ID" value="NC_004567.2"/>
</dbReference>
<dbReference type="SMR" id="Q88YK8"/>
<dbReference type="STRING" id="220668.lp_0749"/>
<dbReference type="EnsemblBacteria" id="CCC78215">
    <property type="protein sequence ID" value="CCC78215"/>
    <property type="gene ID" value="lp_0749"/>
</dbReference>
<dbReference type="KEGG" id="lpl:lp_0749"/>
<dbReference type="PATRIC" id="fig|220668.9.peg.630"/>
<dbReference type="eggNOG" id="COG1117">
    <property type="taxonomic scope" value="Bacteria"/>
</dbReference>
<dbReference type="HOGENOM" id="CLU_000604_1_22_9"/>
<dbReference type="OrthoDB" id="9802185at2"/>
<dbReference type="PhylomeDB" id="Q88YK8"/>
<dbReference type="Proteomes" id="UP000000432">
    <property type="component" value="Chromosome"/>
</dbReference>
<dbReference type="GO" id="GO:0005886">
    <property type="term" value="C:plasma membrane"/>
    <property type="evidence" value="ECO:0007669"/>
    <property type="project" value="UniProtKB-SubCell"/>
</dbReference>
<dbReference type="GO" id="GO:0005524">
    <property type="term" value="F:ATP binding"/>
    <property type="evidence" value="ECO:0007669"/>
    <property type="project" value="UniProtKB-KW"/>
</dbReference>
<dbReference type="GO" id="GO:0016887">
    <property type="term" value="F:ATP hydrolysis activity"/>
    <property type="evidence" value="ECO:0007669"/>
    <property type="project" value="InterPro"/>
</dbReference>
<dbReference type="GO" id="GO:0015415">
    <property type="term" value="F:ATPase-coupled phosphate ion transmembrane transporter activity"/>
    <property type="evidence" value="ECO:0007669"/>
    <property type="project" value="UniProtKB-EC"/>
</dbReference>
<dbReference type="GO" id="GO:0035435">
    <property type="term" value="P:phosphate ion transmembrane transport"/>
    <property type="evidence" value="ECO:0007669"/>
    <property type="project" value="InterPro"/>
</dbReference>
<dbReference type="CDD" id="cd03260">
    <property type="entry name" value="ABC_PstB_phosphate_transporter"/>
    <property type="match status" value="1"/>
</dbReference>
<dbReference type="Gene3D" id="3.40.50.300">
    <property type="entry name" value="P-loop containing nucleotide triphosphate hydrolases"/>
    <property type="match status" value="1"/>
</dbReference>
<dbReference type="InterPro" id="IPR003593">
    <property type="entry name" value="AAA+_ATPase"/>
</dbReference>
<dbReference type="InterPro" id="IPR003439">
    <property type="entry name" value="ABC_transporter-like_ATP-bd"/>
</dbReference>
<dbReference type="InterPro" id="IPR017871">
    <property type="entry name" value="ABC_transporter-like_CS"/>
</dbReference>
<dbReference type="InterPro" id="IPR027417">
    <property type="entry name" value="P-loop_NTPase"/>
</dbReference>
<dbReference type="InterPro" id="IPR005670">
    <property type="entry name" value="PstB-like"/>
</dbReference>
<dbReference type="NCBIfam" id="TIGR00972">
    <property type="entry name" value="3a0107s01c2"/>
    <property type="match status" value="1"/>
</dbReference>
<dbReference type="PANTHER" id="PTHR43423">
    <property type="entry name" value="ABC TRANSPORTER I FAMILY MEMBER 17"/>
    <property type="match status" value="1"/>
</dbReference>
<dbReference type="PANTHER" id="PTHR43423:SF10">
    <property type="entry name" value="PHOSPHATE IMPORT ATP-BINDING PROTEIN PSTB 2"/>
    <property type="match status" value="1"/>
</dbReference>
<dbReference type="Pfam" id="PF00005">
    <property type="entry name" value="ABC_tran"/>
    <property type="match status" value="1"/>
</dbReference>
<dbReference type="SMART" id="SM00382">
    <property type="entry name" value="AAA"/>
    <property type="match status" value="1"/>
</dbReference>
<dbReference type="SUPFAM" id="SSF52540">
    <property type="entry name" value="P-loop containing nucleoside triphosphate hydrolases"/>
    <property type="match status" value="1"/>
</dbReference>
<dbReference type="PROSITE" id="PS00211">
    <property type="entry name" value="ABC_TRANSPORTER_1"/>
    <property type="match status" value="1"/>
</dbReference>
<dbReference type="PROSITE" id="PS50893">
    <property type="entry name" value="ABC_TRANSPORTER_2"/>
    <property type="match status" value="1"/>
</dbReference>
<dbReference type="PROSITE" id="PS51238">
    <property type="entry name" value="PSTB"/>
    <property type="match status" value="1"/>
</dbReference>
<sequence length="269" mass="30401">MADNTMTTTQRNIMAFDPKDHEIALSTEDLHVFYGKSEAISEGDLQFERYKISALIGPSGSGKSTYLRSLNRMNDRIATVKGKIMYRGLDINSNDIDVYEMRRHIGMVFQRPNPFAKSIYENIAFALRQRGMNKKQDLDEIVERSLRQAAMWDQVKDDLNKSALALSGGQQQRLCIARAIAIKPDILLLDEPASALDPVSTSQIEDTLLELKQNYTIIIVTHNMQQASRISDYTAFFNLGKVLEYSETGEIFTNPQVDLTNDYISGNFG</sequence>
<organism>
    <name type="scientific">Lactiplantibacillus plantarum (strain ATCC BAA-793 / NCIMB 8826 / WCFS1)</name>
    <name type="common">Lactobacillus plantarum</name>
    <dbReference type="NCBI Taxonomy" id="220668"/>
    <lineage>
        <taxon>Bacteria</taxon>
        <taxon>Bacillati</taxon>
        <taxon>Bacillota</taxon>
        <taxon>Bacilli</taxon>
        <taxon>Lactobacillales</taxon>
        <taxon>Lactobacillaceae</taxon>
        <taxon>Lactiplantibacillus</taxon>
    </lineage>
</organism>
<protein>
    <recommendedName>
        <fullName evidence="1">Phosphate import ATP-binding protein PstB 1</fullName>
        <ecNumber evidence="1">7.3.2.1</ecNumber>
    </recommendedName>
    <alternativeName>
        <fullName evidence="1">ABC phosphate transporter 1</fullName>
    </alternativeName>
    <alternativeName>
        <fullName evidence="1">Phosphate-transporting ATPase 1</fullName>
    </alternativeName>
</protein>
<comment type="function">
    <text evidence="1">Part of the ABC transporter complex PstSACB involved in phosphate import. Responsible for energy coupling to the transport system.</text>
</comment>
<comment type="catalytic activity">
    <reaction evidence="1">
        <text>phosphate(out) + ATP + H2O = ADP + 2 phosphate(in) + H(+)</text>
        <dbReference type="Rhea" id="RHEA:24440"/>
        <dbReference type="ChEBI" id="CHEBI:15377"/>
        <dbReference type="ChEBI" id="CHEBI:15378"/>
        <dbReference type="ChEBI" id="CHEBI:30616"/>
        <dbReference type="ChEBI" id="CHEBI:43474"/>
        <dbReference type="ChEBI" id="CHEBI:456216"/>
        <dbReference type="EC" id="7.3.2.1"/>
    </reaction>
</comment>
<comment type="subunit">
    <text evidence="1">The complex is composed of two ATP-binding proteins (PstB), two transmembrane proteins (PstC and PstA) and a solute-binding protein (PstS).</text>
</comment>
<comment type="subcellular location">
    <subcellularLocation>
        <location evidence="1">Cell membrane</location>
        <topology evidence="1">Peripheral membrane protein</topology>
    </subcellularLocation>
</comment>
<comment type="similarity">
    <text evidence="1">Belongs to the ABC transporter superfamily. Phosphate importer (TC 3.A.1.7) family.</text>
</comment>
<name>PSTB1_LACPL</name>
<proteinExistence type="inferred from homology"/>
<evidence type="ECO:0000255" key="1">
    <source>
        <dbReference type="HAMAP-Rule" id="MF_01702"/>
    </source>
</evidence>
<accession>Q88YK8</accession>
<accession>F9ULX6</accession>
<reference key="1">
    <citation type="journal article" date="2003" name="Proc. Natl. Acad. Sci. U.S.A.">
        <title>Complete genome sequence of Lactobacillus plantarum WCFS1.</title>
        <authorList>
            <person name="Kleerebezem M."/>
            <person name="Boekhorst J."/>
            <person name="van Kranenburg R."/>
            <person name="Molenaar D."/>
            <person name="Kuipers O.P."/>
            <person name="Leer R."/>
            <person name="Tarchini R."/>
            <person name="Peters S.A."/>
            <person name="Sandbrink H.M."/>
            <person name="Fiers M.W.E.J."/>
            <person name="Stiekema W."/>
            <person name="Klein Lankhorst R.M."/>
            <person name="Bron P.A."/>
            <person name="Hoffer S.M."/>
            <person name="Nierop Groot M.N."/>
            <person name="Kerkhoven R."/>
            <person name="De Vries M."/>
            <person name="Ursing B."/>
            <person name="De Vos W.M."/>
            <person name="Siezen R.J."/>
        </authorList>
    </citation>
    <scope>NUCLEOTIDE SEQUENCE [LARGE SCALE GENOMIC DNA]</scope>
    <source>
        <strain>ATCC BAA-793 / NCIMB 8826 / WCFS1</strain>
    </source>
</reference>
<reference key="2">
    <citation type="journal article" date="2012" name="J. Bacteriol.">
        <title>Complete resequencing and reannotation of the Lactobacillus plantarum WCFS1 genome.</title>
        <authorList>
            <person name="Siezen R.J."/>
            <person name="Francke C."/>
            <person name="Renckens B."/>
            <person name="Boekhorst J."/>
            <person name="Wels M."/>
            <person name="Kleerebezem M."/>
            <person name="van Hijum S.A."/>
        </authorList>
    </citation>
    <scope>NUCLEOTIDE SEQUENCE [LARGE SCALE GENOMIC DNA]</scope>
    <scope>GENOME REANNOTATION</scope>
    <source>
        <strain>ATCC BAA-793 / NCIMB 8826 / WCFS1</strain>
    </source>
</reference>
<keyword id="KW-0067">ATP-binding</keyword>
<keyword id="KW-1003">Cell membrane</keyword>
<keyword id="KW-0472">Membrane</keyword>
<keyword id="KW-0547">Nucleotide-binding</keyword>
<keyword id="KW-0592">Phosphate transport</keyword>
<keyword id="KW-1185">Reference proteome</keyword>
<keyword id="KW-1278">Translocase</keyword>
<keyword id="KW-0813">Transport</keyword>
<gene>
    <name evidence="1" type="primary">pstB1</name>
    <name type="ordered locus">lp_0749</name>
</gene>
<feature type="chain" id="PRO_0000092826" description="Phosphate import ATP-binding protein PstB 1">
    <location>
        <begin position="1"/>
        <end position="269"/>
    </location>
</feature>
<feature type="domain" description="ABC transporter" evidence="1">
    <location>
        <begin position="25"/>
        <end position="264"/>
    </location>
</feature>
<feature type="binding site" evidence="1">
    <location>
        <begin position="57"/>
        <end position="64"/>
    </location>
    <ligand>
        <name>ATP</name>
        <dbReference type="ChEBI" id="CHEBI:30616"/>
    </ligand>
</feature>